<organism>
    <name type="scientific">Salmonella newport (strain SL254)</name>
    <dbReference type="NCBI Taxonomy" id="423368"/>
    <lineage>
        <taxon>Bacteria</taxon>
        <taxon>Pseudomonadati</taxon>
        <taxon>Pseudomonadota</taxon>
        <taxon>Gammaproteobacteria</taxon>
        <taxon>Enterobacterales</taxon>
        <taxon>Enterobacteriaceae</taxon>
        <taxon>Salmonella</taxon>
    </lineage>
</organism>
<gene>
    <name evidence="1" type="primary">rplC</name>
    <name type="ordered locus">SNSL254_A3709</name>
</gene>
<reference key="1">
    <citation type="journal article" date="2011" name="J. Bacteriol.">
        <title>Comparative genomics of 28 Salmonella enterica isolates: evidence for CRISPR-mediated adaptive sublineage evolution.</title>
        <authorList>
            <person name="Fricke W.F."/>
            <person name="Mammel M.K."/>
            <person name="McDermott P.F."/>
            <person name="Tartera C."/>
            <person name="White D.G."/>
            <person name="Leclerc J.E."/>
            <person name="Ravel J."/>
            <person name="Cebula T.A."/>
        </authorList>
    </citation>
    <scope>NUCLEOTIDE SEQUENCE [LARGE SCALE GENOMIC DNA]</scope>
    <source>
        <strain>SL254</strain>
    </source>
</reference>
<proteinExistence type="inferred from homology"/>
<feature type="chain" id="PRO_1000141917" description="Large ribosomal subunit protein uL3">
    <location>
        <begin position="1"/>
        <end position="209"/>
    </location>
</feature>
<feature type="modified residue" description="N5-methylglutamine" evidence="1">
    <location>
        <position position="150"/>
    </location>
</feature>
<evidence type="ECO:0000255" key="1">
    <source>
        <dbReference type="HAMAP-Rule" id="MF_01325"/>
    </source>
</evidence>
<evidence type="ECO:0000305" key="2"/>
<sequence length="209" mass="22248">MIGLVGKKVGMTRIFTEDGVSIPVTVIEVEANRVTQVKDLANDGYRAVQVTTGAKKANRVTKPEAGHFAKAGVEAGRGLWEFRLAEGEEYTVGQSISVELFADVKKVDVTGTSKGKGFAGTVKRWNFRTQDATHGNSLSHRVPGSIGQNQTPGKVFKGKKMAGQMGNERVTVQSLDVVRVDAERNLLLVKGGVPGATGCDLIVKPAVKA</sequence>
<comment type="function">
    <text evidence="1">One of the primary rRNA binding proteins, it binds directly near the 3'-end of the 23S rRNA, where it nucleates assembly of the 50S subunit.</text>
</comment>
<comment type="subunit">
    <text evidence="1">Part of the 50S ribosomal subunit. Forms a cluster with proteins L14 and L19.</text>
</comment>
<comment type="PTM">
    <text evidence="1">Methylated by PrmB.</text>
</comment>
<comment type="similarity">
    <text evidence="1">Belongs to the universal ribosomal protein uL3 family.</text>
</comment>
<dbReference type="EMBL" id="CP001113">
    <property type="protein sequence ID" value="ACF64051.1"/>
    <property type="molecule type" value="Genomic_DNA"/>
</dbReference>
<dbReference type="RefSeq" id="WP_000579838.1">
    <property type="nucleotide sequence ID" value="NZ_CCMR01000003.1"/>
</dbReference>
<dbReference type="SMR" id="B4SUU0"/>
<dbReference type="KEGG" id="see:SNSL254_A3709"/>
<dbReference type="HOGENOM" id="CLU_044142_4_1_6"/>
<dbReference type="Proteomes" id="UP000008824">
    <property type="component" value="Chromosome"/>
</dbReference>
<dbReference type="GO" id="GO:0022625">
    <property type="term" value="C:cytosolic large ribosomal subunit"/>
    <property type="evidence" value="ECO:0007669"/>
    <property type="project" value="TreeGrafter"/>
</dbReference>
<dbReference type="GO" id="GO:0019843">
    <property type="term" value="F:rRNA binding"/>
    <property type="evidence" value="ECO:0007669"/>
    <property type="project" value="UniProtKB-UniRule"/>
</dbReference>
<dbReference type="GO" id="GO:0003735">
    <property type="term" value="F:structural constituent of ribosome"/>
    <property type="evidence" value="ECO:0007669"/>
    <property type="project" value="InterPro"/>
</dbReference>
<dbReference type="GO" id="GO:0006412">
    <property type="term" value="P:translation"/>
    <property type="evidence" value="ECO:0007669"/>
    <property type="project" value="UniProtKB-UniRule"/>
</dbReference>
<dbReference type="FunFam" id="2.40.30.10:FF:000004">
    <property type="entry name" value="50S ribosomal protein L3"/>
    <property type="match status" value="1"/>
</dbReference>
<dbReference type="FunFam" id="3.30.160.810:FF:000001">
    <property type="entry name" value="50S ribosomal protein L3"/>
    <property type="match status" value="1"/>
</dbReference>
<dbReference type="Gene3D" id="3.30.160.810">
    <property type="match status" value="1"/>
</dbReference>
<dbReference type="Gene3D" id="2.40.30.10">
    <property type="entry name" value="Translation factors"/>
    <property type="match status" value="1"/>
</dbReference>
<dbReference type="HAMAP" id="MF_01325_B">
    <property type="entry name" value="Ribosomal_uL3_B"/>
    <property type="match status" value="1"/>
</dbReference>
<dbReference type="InterPro" id="IPR000597">
    <property type="entry name" value="Ribosomal_uL3"/>
</dbReference>
<dbReference type="InterPro" id="IPR019927">
    <property type="entry name" value="Ribosomal_uL3_bac/org-type"/>
</dbReference>
<dbReference type="InterPro" id="IPR019926">
    <property type="entry name" value="Ribosomal_uL3_CS"/>
</dbReference>
<dbReference type="InterPro" id="IPR009000">
    <property type="entry name" value="Transl_B-barrel_sf"/>
</dbReference>
<dbReference type="NCBIfam" id="TIGR03625">
    <property type="entry name" value="L3_bact"/>
    <property type="match status" value="1"/>
</dbReference>
<dbReference type="PANTHER" id="PTHR11229">
    <property type="entry name" value="50S RIBOSOMAL PROTEIN L3"/>
    <property type="match status" value="1"/>
</dbReference>
<dbReference type="PANTHER" id="PTHR11229:SF16">
    <property type="entry name" value="LARGE RIBOSOMAL SUBUNIT PROTEIN UL3C"/>
    <property type="match status" value="1"/>
</dbReference>
<dbReference type="Pfam" id="PF00297">
    <property type="entry name" value="Ribosomal_L3"/>
    <property type="match status" value="1"/>
</dbReference>
<dbReference type="SUPFAM" id="SSF50447">
    <property type="entry name" value="Translation proteins"/>
    <property type="match status" value="1"/>
</dbReference>
<dbReference type="PROSITE" id="PS00474">
    <property type="entry name" value="RIBOSOMAL_L3"/>
    <property type="match status" value="1"/>
</dbReference>
<accession>B4SUU0</accession>
<name>RL3_SALNS</name>
<keyword id="KW-0488">Methylation</keyword>
<keyword id="KW-0687">Ribonucleoprotein</keyword>
<keyword id="KW-0689">Ribosomal protein</keyword>
<keyword id="KW-0694">RNA-binding</keyword>
<keyword id="KW-0699">rRNA-binding</keyword>
<protein>
    <recommendedName>
        <fullName evidence="1">Large ribosomal subunit protein uL3</fullName>
    </recommendedName>
    <alternativeName>
        <fullName evidence="2">50S ribosomal protein L3</fullName>
    </alternativeName>
</protein>